<proteinExistence type="inferred from homology"/>
<protein>
    <recommendedName>
        <fullName>Cytochrome b</fullName>
    </recommendedName>
    <alternativeName>
        <fullName>Complex III subunit 3</fullName>
    </alternativeName>
    <alternativeName>
        <fullName>Complex III subunit III</fullName>
    </alternativeName>
    <alternativeName>
        <fullName>Cytochrome b-c1 complex subunit 3</fullName>
    </alternativeName>
    <alternativeName>
        <fullName>Ubiquinol-cytochrome-c reductase complex cytochrome b subunit</fullName>
    </alternativeName>
</protein>
<feature type="chain" id="PRO_0000060771" description="Cytochrome b">
    <location>
        <begin position="1"/>
        <end position="379"/>
    </location>
</feature>
<feature type="transmembrane region" description="Helical" evidence="2">
    <location>
        <begin position="33"/>
        <end position="53"/>
    </location>
</feature>
<feature type="transmembrane region" description="Helical" evidence="2">
    <location>
        <begin position="77"/>
        <end position="98"/>
    </location>
</feature>
<feature type="transmembrane region" description="Helical" evidence="2">
    <location>
        <begin position="113"/>
        <end position="133"/>
    </location>
</feature>
<feature type="transmembrane region" description="Helical" evidence="2">
    <location>
        <begin position="178"/>
        <end position="198"/>
    </location>
</feature>
<feature type="transmembrane region" description="Helical" evidence="2">
    <location>
        <begin position="226"/>
        <end position="246"/>
    </location>
</feature>
<feature type="transmembrane region" description="Helical" evidence="2">
    <location>
        <begin position="288"/>
        <end position="308"/>
    </location>
</feature>
<feature type="transmembrane region" description="Helical" evidence="2">
    <location>
        <begin position="320"/>
        <end position="340"/>
    </location>
</feature>
<feature type="transmembrane region" description="Helical" evidence="2">
    <location>
        <begin position="347"/>
        <end position="367"/>
    </location>
</feature>
<feature type="binding site" description="axial binding residue" evidence="2">
    <location>
        <position position="83"/>
    </location>
    <ligand>
        <name>heme b</name>
        <dbReference type="ChEBI" id="CHEBI:60344"/>
        <label>b562</label>
    </ligand>
    <ligandPart>
        <name>Fe</name>
        <dbReference type="ChEBI" id="CHEBI:18248"/>
    </ligandPart>
</feature>
<feature type="binding site" description="axial binding residue" evidence="2">
    <location>
        <position position="97"/>
    </location>
    <ligand>
        <name>heme b</name>
        <dbReference type="ChEBI" id="CHEBI:60344"/>
        <label>b566</label>
    </ligand>
    <ligandPart>
        <name>Fe</name>
        <dbReference type="ChEBI" id="CHEBI:18248"/>
    </ligandPart>
</feature>
<feature type="binding site" description="axial binding residue" evidence="2">
    <location>
        <position position="182"/>
    </location>
    <ligand>
        <name>heme b</name>
        <dbReference type="ChEBI" id="CHEBI:60344"/>
        <label>b562</label>
    </ligand>
    <ligandPart>
        <name>Fe</name>
        <dbReference type="ChEBI" id="CHEBI:18248"/>
    </ligandPart>
</feature>
<feature type="binding site" description="axial binding residue" evidence="2">
    <location>
        <position position="196"/>
    </location>
    <ligand>
        <name>heme b</name>
        <dbReference type="ChEBI" id="CHEBI:60344"/>
        <label>b566</label>
    </ligand>
    <ligandPart>
        <name>Fe</name>
        <dbReference type="ChEBI" id="CHEBI:18248"/>
    </ligandPart>
</feature>
<feature type="binding site" evidence="2">
    <location>
        <position position="201"/>
    </location>
    <ligand>
        <name>a ubiquinone</name>
        <dbReference type="ChEBI" id="CHEBI:16389"/>
    </ligand>
</feature>
<name>CYB_CHATU</name>
<dbReference type="EMBL" id="AF321051">
    <property type="protein sequence ID" value="AAG37936.1"/>
    <property type="molecule type" value="Genomic_DNA"/>
</dbReference>
<dbReference type="RefSeq" id="NP_071696.1">
    <property type="nucleotide sequence ID" value="NC_002626.1"/>
</dbReference>
<dbReference type="SMR" id="Q9G3R1"/>
<dbReference type="GeneID" id="802307"/>
<dbReference type="CTD" id="4519"/>
<dbReference type="GO" id="GO:0005743">
    <property type="term" value="C:mitochondrial inner membrane"/>
    <property type="evidence" value="ECO:0007669"/>
    <property type="project" value="UniProtKB-SubCell"/>
</dbReference>
<dbReference type="GO" id="GO:0045275">
    <property type="term" value="C:respiratory chain complex III"/>
    <property type="evidence" value="ECO:0007669"/>
    <property type="project" value="InterPro"/>
</dbReference>
<dbReference type="GO" id="GO:0046872">
    <property type="term" value="F:metal ion binding"/>
    <property type="evidence" value="ECO:0007669"/>
    <property type="project" value="UniProtKB-KW"/>
</dbReference>
<dbReference type="GO" id="GO:0008121">
    <property type="term" value="F:ubiquinol-cytochrome-c reductase activity"/>
    <property type="evidence" value="ECO:0007669"/>
    <property type="project" value="InterPro"/>
</dbReference>
<dbReference type="GO" id="GO:0006122">
    <property type="term" value="P:mitochondrial electron transport, ubiquinol to cytochrome c"/>
    <property type="evidence" value="ECO:0007669"/>
    <property type="project" value="TreeGrafter"/>
</dbReference>
<dbReference type="CDD" id="cd00290">
    <property type="entry name" value="cytochrome_b_C"/>
    <property type="match status" value="1"/>
</dbReference>
<dbReference type="CDD" id="cd00284">
    <property type="entry name" value="Cytochrome_b_N"/>
    <property type="match status" value="1"/>
</dbReference>
<dbReference type="FunFam" id="1.20.810.10:FF:000002">
    <property type="entry name" value="Cytochrome b"/>
    <property type="match status" value="1"/>
</dbReference>
<dbReference type="Gene3D" id="1.20.810.10">
    <property type="entry name" value="Cytochrome Bc1 Complex, Chain C"/>
    <property type="match status" value="1"/>
</dbReference>
<dbReference type="InterPro" id="IPR005798">
    <property type="entry name" value="Cyt_b/b6_C"/>
</dbReference>
<dbReference type="InterPro" id="IPR036150">
    <property type="entry name" value="Cyt_b/b6_C_sf"/>
</dbReference>
<dbReference type="InterPro" id="IPR005797">
    <property type="entry name" value="Cyt_b/b6_N"/>
</dbReference>
<dbReference type="InterPro" id="IPR027387">
    <property type="entry name" value="Cytb/b6-like_sf"/>
</dbReference>
<dbReference type="InterPro" id="IPR030689">
    <property type="entry name" value="Cytochrome_b"/>
</dbReference>
<dbReference type="InterPro" id="IPR048260">
    <property type="entry name" value="Cytochrome_b_C_euk/bac"/>
</dbReference>
<dbReference type="InterPro" id="IPR048259">
    <property type="entry name" value="Cytochrome_b_N_euk/bac"/>
</dbReference>
<dbReference type="InterPro" id="IPR016174">
    <property type="entry name" value="Di-haem_cyt_TM"/>
</dbReference>
<dbReference type="PANTHER" id="PTHR19271">
    <property type="entry name" value="CYTOCHROME B"/>
    <property type="match status" value="1"/>
</dbReference>
<dbReference type="PANTHER" id="PTHR19271:SF16">
    <property type="entry name" value="CYTOCHROME B"/>
    <property type="match status" value="1"/>
</dbReference>
<dbReference type="Pfam" id="PF00032">
    <property type="entry name" value="Cytochrom_B_C"/>
    <property type="match status" value="1"/>
</dbReference>
<dbReference type="Pfam" id="PF00033">
    <property type="entry name" value="Cytochrome_B"/>
    <property type="match status" value="1"/>
</dbReference>
<dbReference type="PIRSF" id="PIRSF038885">
    <property type="entry name" value="COB"/>
    <property type="match status" value="1"/>
</dbReference>
<dbReference type="SUPFAM" id="SSF81648">
    <property type="entry name" value="a domain/subunit of cytochrome bc1 complex (Ubiquinol-cytochrome c reductase)"/>
    <property type="match status" value="1"/>
</dbReference>
<dbReference type="SUPFAM" id="SSF81342">
    <property type="entry name" value="Transmembrane di-heme cytochromes"/>
    <property type="match status" value="1"/>
</dbReference>
<dbReference type="PROSITE" id="PS51003">
    <property type="entry name" value="CYTB_CTER"/>
    <property type="match status" value="1"/>
</dbReference>
<dbReference type="PROSITE" id="PS51002">
    <property type="entry name" value="CYTB_NTER"/>
    <property type="match status" value="1"/>
</dbReference>
<gene>
    <name type="primary">MT-CYB</name>
    <name type="synonym">COB</name>
    <name type="synonym">CYTB</name>
    <name type="synonym">MTCYB</name>
</gene>
<evidence type="ECO:0000250" key="1"/>
<evidence type="ECO:0000250" key="2">
    <source>
        <dbReference type="UniProtKB" id="P00157"/>
    </source>
</evidence>
<evidence type="ECO:0000255" key="3">
    <source>
        <dbReference type="PROSITE-ProRule" id="PRU00967"/>
    </source>
</evidence>
<evidence type="ECO:0000255" key="4">
    <source>
        <dbReference type="PROSITE-ProRule" id="PRU00968"/>
    </source>
</evidence>
<geneLocation type="mitochondrion"/>
<organism>
    <name type="scientific">Chalinolobus tuberculatus</name>
    <name type="common">New Zealand long-tailed bat</name>
    <dbReference type="NCBI Taxonomy" id="143942"/>
    <lineage>
        <taxon>Eukaryota</taxon>
        <taxon>Metazoa</taxon>
        <taxon>Chordata</taxon>
        <taxon>Craniata</taxon>
        <taxon>Vertebrata</taxon>
        <taxon>Euteleostomi</taxon>
        <taxon>Mammalia</taxon>
        <taxon>Eutheria</taxon>
        <taxon>Laurasiatheria</taxon>
        <taxon>Chiroptera</taxon>
        <taxon>Yangochiroptera</taxon>
        <taxon>Vespertilionidae</taxon>
        <taxon>Chalinolobus</taxon>
    </lineage>
</organism>
<accession>Q9G3R1</accession>
<reference key="1">
    <citation type="journal article" date="2001" name="Mol. Biol. Evol.">
        <title>Implications for bat evolution from two new complete mitochondrial genomes.</title>
        <authorList>
            <person name="Lin Y.-H."/>
            <person name="Penny D."/>
        </authorList>
    </citation>
    <scope>NUCLEOTIDE SEQUENCE [GENOMIC DNA]</scope>
</reference>
<keyword id="KW-0249">Electron transport</keyword>
<keyword id="KW-0349">Heme</keyword>
<keyword id="KW-0408">Iron</keyword>
<keyword id="KW-0472">Membrane</keyword>
<keyword id="KW-0479">Metal-binding</keyword>
<keyword id="KW-0496">Mitochondrion</keyword>
<keyword id="KW-0999">Mitochondrion inner membrane</keyword>
<keyword id="KW-0679">Respiratory chain</keyword>
<keyword id="KW-0812">Transmembrane</keyword>
<keyword id="KW-1133">Transmembrane helix</keyword>
<keyword id="KW-0813">Transport</keyword>
<keyword id="KW-0830">Ubiquinone</keyword>
<comment type="function">
    <text evidence="2">Component of the ubiquinol-cytochrome c reductase complex (complex III or cytochrome b-c1 complex) that is part of the mitochondrial respiratory chain. The b-c1 complex mediates electron transfer from ubiquinol to cytochrome c. Contributes to the generation of a proton gradient across the mitochondrial membrane that is then used for ATP synthesis.</text>
</comment>
<comment type="cofactor">
    <cofactor evidence="2">
        <name>heme b</name>
        <dbReference type="ChEBI" id="CHEBI:60344"/>
    </cofactor>
    <text evidence="2">Binds 2 heme b groups non-covalently.</text>
</comment>
<comment type="subunit">
    <text evidence="2">The cytochrome bc1 complex contains 11 subunits: 3 respiratory subunits (MT-CYB, CYC1 and UQCRFS1), 2 core proteins (UQCRC1 and UQCRC2) and 6 low-molecular weight proteins (UQCRH/QCR6, UQCRB/QCR7, UQCRQ/QCR8, UQCR10/QCR9, UQCR11/QCR10 and a cleavage product of UQCRFS1). This cytochrome bc1 complex then forms a dimer.</text>
</comment>
<comment type="subcellular location">
    <subcellularLocation>
        <location evidence="2">Mitochondrion inner membrane</location>
        <topology evidence="2">Multi-pass membrane protein</topology>
    </subcellularLocation>
</comment>
<comment type="miscellaneous">
    <text evidence="1">Heme 1 (or BL or b562) is low-potential and absorbs at about 562 nm, and heme 2 (or BH or b566) is high-potential and absorbs at about 566 nm.</text>
</comment>
<comment type="similarity">
    <text evidence="3 4">Belongs to the cytochrome b family.</text>
</comment>
<comment type="caution">
    <text evidence="2">The full-length protein contains only eight transmembrane helices, not nine as predicted by bioinformatics tools.</text>
</comment>
<sequence length="379" mass="42872">MTNIRKSHPLIKIINSSFIDLPTPSSISSWWNFGSLLGTCLALQILTGLFLAMHYTSDTATAFNSVSHMCREVNYGWVLRYLHANGASMFFICLYMHVGRGIYYGSYMFKETWNTGVILLFTVMATAFMGYVLPWGQMSFWGATVITNLLSAIPYIGTDLVEWIWGGFSVDKATLTRFFAFHFLLPFIISALVMVHLLFLHETGSNNPTGMPSNTDMIPFHPYHTIKDMLGFFVMMLALLCLVLFSPDMLGDPDNYSPANPLSTPPHIKPEWYFLFAYAILRSIPNKLGGVLALVLSILILVIIPLLHTSKQRSMTFRPFSQCLFWLLVADLLTLTWIGGQPVEHPYVIIGQLASILYFLIIIVLMPLTSLMENHLLKW</sequence>